<sequence>MKLSLDWMNDFTPLKEVGLDAILKKIAISVCEIDDATEFRPELDFVKIVRIESLEKHPSADKLQIVQVFDGSSKSQIVTGATNVKIGDLVPLAIPGAKLGDKEILESELRGVKSSGMLCSEKELFLSEEGNGVWILNGLDQAEVGKTIRSFLYYDDIIFEVDNKSITHRPDLWSHFGFARELASQLRLPIVFNPFESLWNFDLSVKLPKVLENQNAHSYYASSISGVSVFPSKRKFQSRLQKCGVRVINNVVDVSNYVMLEMGQPTHFFDKKFLENQGEISLEVSFAKKGESFALLDETSPALEEEVLLIRNQGKPVAIAGVMGGKESAVQNTTTEIVMESAVFMRERIRKSIRSTGIRSDSSVRYEKGLEATTTLPVIRRALNLLKENGCSELKASEPVGFLHIPHKEVRIHTDIHFINAKLGVTLSQGDITDILERLHFIVSWKGEHLEVLVPKFRHNYDVTIPEDLVEEIGRTKGYDTIQVSPLLAEVKTPIRNLNRELERKCKTFFAIALKYHEVFNYSFQSYKENEFSGDPKLSVKIKNEMPEEQSVLRNSLLPSLLKNTRTNQDRFSEIKIFEFGRVYFNLPEPENEKKIFAFAVSLDKKSSEPDLKLLEEDFLKIKKEVESFLESIQIYEYTWKIQQETIFHPGANLCLVARSGKDGLETIVGNLGYVHPAILDSFELKKRVIYGSFEFERIVELWNQNRKVSRFVTPSQFPEAEIDLSILVGEKENTNVFTDLVKLERIPELKEGWVYSQFMGGNVPEGKKSVSYRFRLVNYERTFTQERIKEISDQLVILAGKNGFVLR</sequence>
<organism>
    <name type="scientific">Leptospira interrogans serogroup Icterohaemorrhagiae serovar Lai (strain 56601)</name>
    <dbReference type="NCBI Taxonomy" id="189518"/>
    <lineage>
        <taxon>Bacteria</taxon>
        <taxon>Pseudomonadati</taxon>
        <taxon>Spirochaetota</taxon>
        <taxon>Spirochaetia</taxon>
        <taxon>Leptospirales</taxon>
        <taxon>Leptospiraceae</taxon>
        <taxon>Leptospira</taxon>
    </lineage>
</organism>
<evidence type="ECO:0000255" key="1">
    <source>
        <dbReference type="HAMAP-Rule" id="MF_00283"/>
    </source>
</evidence>
<comment type="catalytic activity">
    <reaction evidence="1">
        <text>tRNA(Phe) + L-phenylalanine + ATP = L-phenylalanyl-tRNA(Phe) + AMP + diphosphate + H(+)</text>
        <dbReference type="Rhea" id="RHEA:19413"/>
        <dbReference type="Rhea" id="RHEA-COMP:9668"/>
        <dbReference type="Rhea" id="RHEA-COMP:9699"/>
        <dbReference type="ChEBI" id="CHEBI:15378"/>
        <dbReference type="ChEBI" id="CHEBI:30616"/>
        <dbReference type="ChEBI" id="CHEBI:33019"/>
        <dbReference type="ChEBI" id="CHEBI:58095"/>
        <dbReference type="ChEBI" id="CHEBI:78442"/>
        <dbReference type="ChEBI" id="CHEBI:78531"/>
        <dbReference type="ChEBI" id="CHEBI:456215"/>
        <dbReference type="EC" id="6.1.1.20"/>
    </reaction>
</comment>
<comment type="cofactor">
    <cofactor evidence="1">
        <name>Mg(2+)</name>
        <dbReference type="ChEBI" id="CHEBI:18420"/>
    </cofactor>
    <text evidence="1">Binds 2 magnesium ions per tetramer.</text>
</comment>
<comment type="subunit">
    <text evidence="1">Tetramer of two alpha and two beta subunits.</text>
</comment>
<comment type="subcellular location">
    <subcellularLocation>
        <location evidence="1">Cytoplasm</location>
    </subcellularLocation>
</comment>
<comment type="similarity">
    <text evidence="1">Belongs to the phenylalanyl-tRNA synthetase beta subunit family. Type 1 subfamily.</text>
</comment>
<protein>
    <recommendedName>
        <fullName evidence="1">Phenylalanine--tRNA ligase beta subunit</fullName>
        <ecNumber evidence="1">6.1.1.20</ecNumber>
    </recommendedName>
    <alternativeName>
        <fullName evidence="1">Phenylalanyl-tRNA synthetase beta subunit</fullName>
        <shortName evidence="1">PheRS</shortName>
    </alternativeName>
</protein>
<name>SYFB_LEPIN</name>
<feature type="chain" id="PRO_0000126905" description="Phenylalanine--tRNA ligase beta subunit">
    <location>
        <begin position="1"/>
        <end position="808"/>
    </location>
</feature>
<feature type="domain" description="tRNA-binding" evidence="1">
    <location>
        <begin position="40"/>
        <end position="149"/>
    </location>
</feature>
<feature type="domain" description="B5" evidence="1">
    <location>
        <begin position="407"/>
        <end position="484"/>
    </location>
</feature>
<feature type="domain" description="FDX-ACB" evidence="1">
    <location>
        <begin position="716"/>
        <end position="808"/>
    </location>
</feature>
<feature type="binding site" evidence="1">
    <location>
        <position position="462"/>
    </location>
    <ligand>
        <name>Mg(2+)</name>
        <dbReference type="ChEBI" id="CHEBI:18420"/>
        <note>shared with alpha subunit</note>
    </ligand>
</feature>
<feature type="binding site" evidence="1">
    <location>
        <position position="468"/>
    </location>
    <ligand>
        <name>Mg(2+)</name>
        <dbReference type="ChEBI" id="CHEBI:18420"/>
        <note>shared with alpha subunit</note>
    </ligand>
</feature>
<feature type="binding site" evidence="1">
    <location>
        <position position="471"/>
    </location>
    <ligand>
        <name>Mg(2+)</name>
        <dbReference type="ChEBI" id="CHEBI:18420"/>
        <note>shared with alpha subunit</note>
    </ligand>
</feature>
<feature type="binding site" evidence="1">
    <location>
        <position position="472"/>
    </location>
    <ligand>
        <name>Mg(2+)</name>
        <dbReference type="ChEBI" id="CHEBI:18420"/>
        <note>shared with alpha subunit</note>
    </ligand>
</feature>
<gene>
    <name evidence="1" type="primary">pheT</name>
    <name type="ordered locus">LA_4035</name>
</gene>
<proteinExistence type="inferred from homology"/>
<reference key="1">
    <citation type="journal article" date="2003" name="Nature">
        <title>Unique physiological and pathogenic features of Leptospira interrogans revealed by whole-genome sequencing.</title>
        <authorList>
            <person name="Ren S.-X."/>
            <person name="Fu G."/>
            <person name="Jiang X.-G."/>
            <person name="Zeng R."/>
            <person name="Miao Y.-G."/>
            <person name="Xu H."/>
            <person name="Zhang Y.-X."/>
            <person name="Xiong H."/>
            <person name="Lu G."/>
            <person name="Lu L.-F."/>
            <person name="Jiang H.-Q."/>
            <person name="Jia J."/>
            <person name="Tu Y.-F."/>
            <person name="Jiang J.-X."/>
            <person name="Gu W.-Y."/>
            <person name="Zhang Y.-Q."/>
            <person name="Cai Z."/>
            <person name="Sheng H.-H."/>
            <person name="Yin H.-F."/>
            <person name="Zhang Y."/>
            <person name="Zhu G.-F."/>
            <person name="Wan M."/>
            <person name="Huang H.-L."/>
            <person name="Qian Z."/>
            <person name="Wang S.-Y."/>
            <person name="Ma W."/>
            <person name="Yao Z.-J."/>
            <person name="Shen Y."/>
            <person name="Qiang B.-Q."/>
            <person name="Xia Q.-C."/>
            <person name="Guo X.-K."/>
            <person name="Danchin A."/>
            <person name="Saint Girons I."/>
            <person name="Somerville R.L."/>
            <person name="Wen Y.-M."/>
            <person name="Shi M.-H."/>
            <person name="Chen Z."/>
            <person name="Xu J.-G."/>
            <person name="Zhao G.-P."/>
        </authorList>
    </citation>
    <scope>NUCLEOTIDE SEQUENCE [LARGE SCALE GENOMIC DNA]</scope>
    <source>
        <strain>56601</strain>
    </source>
</reference>
<dbReference type="EC" id="6.1.1.20" evidence="1"/>
<dbReference type="EMBL" id="AE010300">
    <property type="protein sequence ID" value="AAN51233.1"/>
    <property type="molecule type" value="Genomic_DNA"/>
</dbReference>
<dbReference type="RefSeq" id="NP_714215.1">
    <property type="nucleotide sequence ID" value="NC_004342.2"/>
</dbReference>
<dbReference type="RefSeq" id="WP_000777486.1">
    <property type="nucleotide sequence ID" value="NC_004342.2"/>
</dbReference>
<dbReference type="SMR" id="Q8EZ26"/>
<dbReference type="FunCoup" id="Q8EZ26">
    <property type="interactions" value="428"/>
</dbReference>
<dbReference type="STRING" id="189518.LA_4035"/>
<dbReference type="PaxDb" id="189518-LA_4035"/>
<dbReference type="EnsemblBacteria" id="AAN51233">
    <property type="protein sequence ID" value="AAN51233"/>
    <property type="gene ID" value="LA_4035"/>
</dbReference>
<dbReference type="KEGG" id="lil:LA_4035"/>
<dbReference type="PATRIC" id="fig|189518.3.peg.4002"/>
<dbReference type="HOGENOM" id="CLU_016891_0_0_12"/>
<dbReference type="InParanoid" id="Q8EZ26"/>
<dbReference type="OrthoDB" id="9805455at2"/>
<dbReference type="Proteomes" id="UP000001408">
    <property type="component" value="Chromosome I"/>
</dbReference>
<dbReference type="GO" id="GO:0009328">
    <property type="term" value="C:phenylalanine-tRNA ligase complex"/>
    <property type="evidence" value="ECO:0000318"/>
    <property type="project" value="GO_Central"/>
</dbReference>
<dbReference type="GO" id="GO:0005524">
    <property type="term" value="F:ATP binding"/>
    <property type="evidence" value="ECO:0007669"/>
    <property type="project" value="UniProtKB-UniRule"/>
</dbReference>
<dbReference type="GO" id="GO:0000287">
    <property type="term" value="F:magnesium ion binding"/>
    <property type="evidence" value="ECO:0007669"/>
    <property type="project" value="UniProtKB-UniRule"/>
</dbReference>
<dbReference type="GO" id="GO:0004826">
    <property type="term" value="F:phenylalanine-tRNA ligase activity"/>
    <property type="evidence" value="ECO:0007669"/>
    <property type="project" value="UniProtKB-UniRule"/>
</dbReference>
<dbReference type="GO" id="GO:0000049">
    <property type="term" value="F:tRNA binding"/>
    <property type="evidence" value="ECO:0007669"/>
    <property type="project" value="UniProtKB-KW"/>
</dbReference>
<dbReference type="GO" id="GO:0006432">
    <property type="term" value="P:phenylalanyl-tRNA aminoacylation"/>
    <property type="evidence" value="ECO:0000318"/>
    <property type="project" value="GO_Central"/>
</dbReference>
<dbReference type="CDD" id="cd00769">
    <property type="entry name" value="PheRS_beta_core"/>
    <property type="match status" value="1"/>
</dbReference>
<dbReference type="CDD" id="cd02796">
    <property type="entry name" value="tRNA_bind_bactPheRS"/>
    <property type="match status" value="1"/>
</dbReference>
<dbReference type="FunFam" id="2.40.50.140:FF:000045">
    <property type="entry name" value="Phenylalanine--tRNA ligase beta subunit"/>
    <property type="match status" value="1"/>
</dbReference>
<dbReference type="FunFam" id="3.50.40.10:FF:000006">
    <property type="entry name" value="Phenylalanine--tRNA ligase beta subunit"/>
    <property type="match status" value="1"/>
</dbReference>
<dbReference type="Gene3D" id="3.30.56.10">
    <property type="match status" value="2"/>
</dbReference>
<dbReference type="Gene3D" id="3.30.930.10">
    <property type="entry name" value="Bira Bifunctional Protein, Domain 2"/>
    <property type="match status" value="1"/>
</dbReference>
<dbReference type="Gene3D" id="3.30.70.380">
    <property type="entry name" value="Ferrodoxin-fold anticodon-binding domain"/>
    <property type="match status" value="1"/>
</dbReference>
<dbReference type="Gene3D" id="2.40.50.140">
    <property type="entry name" value="Nucleic acid-binding proteins"/>
    <property type="match status" value="1"/>
</dbReference>
<dbReference type="Gene3D" id="3.50.40.10">
    <property type="entry name" value="Phenylalanyl-trna Synthetase, Chain B, domain 3"/>
    <property type="match status" value="1"/>
</dbReference>
<dbReference type="HAMAP" id="MF_00283">
    <property type="entry name" value="Phe_tRNA_synth_beta1"/>
    <property type="match status" value="1"/>
</dbReference>
<dbReference type="InterPro" id="IPR045864">
    <property type="entry name" value="aa-tRNA-synth_II/BPL/LPL"/>
</dbReference>
<dbReference type="InterPro" id="IPR005146">
    <property type="entry name" value="B3/B4_tRNA-bd"/>
</dbReference>
<dbReference type="InterPro" id="IPR009061">
    <property type="entry name" value="DNA-bd_dom_put_sf"/>
</dbReference>
<dbReference type="InterPro" id="IPR005121">
    <property type="entry name" value="Fdx_antiC-bd"/>
</dbReference>
<dbReference type="InterPro" id="IPR036690">
    <property type="entry name" value="Fdx_antiC-bd_sf"/>
</dbReference>
<dbReference type="InterPro" id="IPR012340">
    <property type="entry name" value="NA-bd_OB-fold"/>
</dbReference>
<dbReference type="InterPro" id="IPR045060">
    <property type="entry name" value="Phe-tRNA-ligase_IIc_bsu"/>
</dbReference>
<dbReference type="InterPro" id="IPR004532">
    <property type="entry name" value="Phe-tRNA-ligase_IIc_bsu_bact"/>
</dbReference>
<dbReference type="InterPro" id="IPR020825">
    <property type="entry name" value="Phe-tRNA_synthase-like_B3/B4"/>
</dbReference>
<dbReference type="InterPro" id="IPR041616">
    <property type="entry name" value="PheRS_beta_core"/>
</dbReference>
<dbReference type="InterPro" id="IPR002547">
    <property type="entry name" value="tRNA-bd_dom"/>
</dbReference>
<dbReference type="InterPro" id="IPR033714">
    <property type="entry name" value="tRNA_bind_bactPheRS"/>
</dbReference>
<dbReference type="InterPro" id="IPR005147">
    <property type="entry name" value="tRNA_synthase_B5-dom"/>
</dbReference>
<dbReference type="NCBIfam" id="TIGR00472">
    <property type="entry name" value="pheT_bact"/>
    <property type="match status" value="1"/>
</dbReference>
<dbReference type="PANTHER" id="PTHR10947:SF0">
    <property type="entry name" value="PHENYLALANINE--TRNA LIGASE BETA SUBUNIT"/>
    <property type="match status" value="1"/>
</dbReference>
<dbReference type="PANTHER" id="PTHR10947">
    <property type="entry name" value="PHENYLALANYL-TRNA SYNTHETASE BETA CHAIN AND LEUCINE-RICH REPEAT-CONTAINING PROTEIN 47"/>
    <property type="match status" value="1"/>
</dbReference>
<dbReference type="Pfam" id="PF03483">
    <property type="entry name" value="B3_4"/>
    <property type="match status" value="1"/>
</dbReference>
<dbReference type="Pfam" id="PF03484">
    <property type="entry name" value="B5"/>
    <property type="match status" value="1"/>
</dbReference>
<dbReference type="Pfam" id="PF03147">
    <property type="entry name" value="FDX-ACB"/>
    <property type="match status" value="1"/>
</dbReference>
<dbReference type="Pfam" id="PF01588">
    <property type="entry name" value="tRNA_bind"/>
    <property type="match status" value="1"/>
</dbReference>
<dbReference type="Pfam" id="PF17759">
    <property type="entry name" value="tRNA_synthFbeta"/>
    <property type="match status" value="1"/>
</dbReference>
<dbReference type="SMART" id="SM00873">
    <property type="entry name" value="B3_4"/>
    <property type="match status" value="1"/>
</dbReference>
<dbReference type="SMART" id="SM00874">
    <property type="entry name" value="B5"/>
    <property type="match status" value="1"/>
</dbReference>
<dbReference type="SMART" id="SM00896">
    <property type="entry name" value="FDX-ACB"/>
    <property type="match status" value="1"/>
</dbReference>
<dbReference type="SUPFAM" id="SSF54991">
    <property type="entry name" value="Anticodon-binding domain of PheRS"/>
    <property type="match status" value="1"/>
</dbReference>
<dbReference type="SUPFAM" id="SSF55681">
    <property type="entry name" value="Class II aaRS and biotin synthetases"/>
    <property type="match status" value="1"/>
</dbReference>
<dbReference type="SUPFAM" id="SSF50249">
    <property type="entry name" value="Nucleic acid-binding proteins"/>
    <property type="match status" value="1"/>
</dbReference>
<dbReference type="SUPFAM" id="SSF56037">
    <property type="entry name" value="PheT/TilS domain"/>
    <property type="match status" value="1"/>
</dbReference>
<dbReference type="SUPFAM" id="SSF46955">
    <property type="entry name" value="Putative DNA-binding domain"/>
    <property type="match status" value="1"/>
</dbReference>
<dbReference type="PROSITE" id="PS51483">
    <property type="entry name" value="B5"/>
    <property type="match status" value="1"/>
</dbReference>
<dbReference type="PROSITE" id="PS51447">
    <property type="entry name" value="FDX_ACB"/>
    <property type="match status" value="1"/>
</dbReference>
<dbReference type="PROSITE" id="PS50886">
    <property type="entry name" value="TRBD"/>
    <property type="match status" value="1"/>
</dbReference>
<keyword id="KW-0030">Aminoacyl-tRNA synthetase</keyword>
<keyword id="KW-0067">ATP-binding</keyword>
<keyword id="KW-0963">Cytoplasm</keyword>
<keyword id="KW-0436">Ligase</keyword>
<keyword id="KW-0460">Magnesium</keyword>
<keyword id="KW-0479">Metal-binding</keyword>
<keyword id="KW-0547">Nucleotide-binding</keyword>
<keyword id="KW-0648">Protein biosynthesis</keyword>
<keyword id="KW-1185">Reference proteome</keyword>
<keyword id="KW-0694">RNA-binding</keyword>
<keyword id="KW-0820">tRNA-binding</keyword>
<accession>Q8EZ26</accession>